<dbReference type="EC" id="3.6.5.3" evidence="2"/>
<dbReference type="EMBL" id="AM420293">
    <property type="protein sequence ID" value="CAM06002.1"/>
    <property type="molecule type" value="Genomic_DNA"/>
</dbReference>
<dbReference type="RefSeq" id="WP_009948624.1">
    <property type="nucleotide sequence ID" value="NC_009142.1"/>
</dbReference>
<dbReference type="SMR" id="A4FPM7"/>
<dbReference type="STRING" id="405948.SACE_6838"/>
<dbReference type="KEGG" id="sen:SACE_6838"/>
<dbReference type="eggNOG" id="COG0050">
    <property type="taxonomic scope" value="Bacteria"/>
</dbReference>
<dbReference type="HOGENOM" id="CLU_007265_0_1_11"/>
<dbReference type="OrthoDB" id="9803139at2"/>
<dbReference type="Proteomes" id="UP000006728">
    <property type="component" value="Chromosome"/>
</dbReference>
<dbReference type="GO" id="GO:0005829">
    <property type="term" value="C:cytosol"/>
    <property type="evidence" value="ECO:0007669"/>
    <property type="project" value="TreeGrafter"/>
</dbReference>
<dbReference type="GO" id="GO:0005525">
    <property type="term" value="F:GTP binding"/>
    <property type="evidence" value="ECO:0007669"/>
    <property type="project" value="UniProtKB-UniRule"/>
</dbReference>
<dbReference type="GO" id="GO:0003924">
    <property type="term" value="F:GTPase activity"/>
    <property type="evidence" value="ECO:0007669"/>
    <property type="project" value="InterPro"/>
</dbReference>
<dbReference type="GO" id="GO:0003746">
    <property type="term" value="F:translation elongation factor activity"/>
    <property type="evidence" value="ECO:0007669"/>
    <property type="project" value="UniProtKB-UniRule"/>
</dbReference>
<dbReference type="CDD" id="cd01884">
    <property type="entry name" value="EF_Tu"/>
    <property type="match status" value="1"/>
</dbReference>
<dbReference type="CDD" id="cd03697">
    <property type="entry name" value="EFTU_II"/>
    <property type="match status" value="1"/>
</dbReference>
<dbReference type="CDD" id="cd03707">
    <property type="entry name" value="EFTU_III"/>
    <property type="match status" value="1"/>
</dbReference>
<dbReference type="FunFam" id="2.40.30.10:FF:000001">
    <property type="entry name" value="Elongation factor Tu"/>
    <property type="match status" value="1"/>
</dbReference>
<dbReference type="FunFam" id="3.40.50.300:FF:000003">
    <property type="entry name" value="Elongation factor Tu"/>
    <property type="match status" value="1"/>
</dbReference>
<dbReference type="Gene3D" id="3.40.50.300">
    <property type="entry name" value="P-loop containing nucleotide triphosphate hydrolases"/>
    <property type="match status" value="1"/>
</dbReference>
<dbReference type="Gene3D" id="2.40.30.10">
    <property type="entry name" value="Translation factors"/>
    <property type="match status" value="2"/>
</dbReference>
<dbReference type="HAMAP" id="MF_00118_B">
    <property type="entry name" value="EF_Tu_B"/>
    <property type="match status" value="1"/>
</dbReference>
<dbReference type="InterPro" id="IPR041709">
    <property type="entry name" value="EF-Tu_GTP-bd"/>
</dbReference>
<dbReference type="InterPro" id="IPR050055">
    <property type="entry name" value="EF-Tu_GTPase"/>
</dbReference>
<dbReference type="InterPro" id="IPR004161">
    <property type="entry name" value="EFTu-like_2"/>
</dbReference>
<dbReference type="InterPro" id="IPR033720">
    <property type="entry name" value="EFTU_2"/>
</dbReference>
<dbReference type="InterPro" id="IPR031157">
    <property type="entry name" value="G_TR_CS"/>
</dbReference>
<dbReference type="InterPro" id="IPR027417">
    <property type="entry name" value="P-loop_NTPase"/>
</dbReference>
<dbReference type="InterPro" id="IPR005225">
    <property type="entry name" value="Small_GTP-bd"/>
</dbReference>
<dbReference type="InterPro" id="IPR000795">
    <property type="entry name" value="T_Tr_GTP-bd_dom"/>
</dbReference>
<dbReference type="InterPro" id="IPR009000">
    <property type="entry name" value="Transl_B-barrel_sf"/>
</dbReference>
<dbReference type="InterPro" id="IPR009001">
    <property type="entry name" value="Transl_elong_EF1A/Init_IF2_C"/>
</dbReference>
<dbReference type="InterPro" id="IPR004541">
    <property type="entry name" value="Transl_elong_EFTu/EF1A_bac/org"/>
</dbReference>
<dbReference type="InterPro" id="IPR004160">
    <property type="entry name" value="Transl_elong_EFTu/EF1A_C"/>
</dbReference>
<dbReference type="NCBIfam" id="TIGR00485">
    <property type="entry name" value="EF-Tu"/>
    <property type="match status" value="1"/>
</dbReference>
<dbReference type="NCBIfam" id="NF000766">
    <property type="entry name" value="PRK00049.1"/>
    <property type="match status" value="1"/>
</dbReference>
<dbReference type="NCBIfam" id="NF009372">
    <property type="entry name" value="PRK12735.1"/>
    <property type="match status" value="1"/>
</dbReference>
<dbReference type="NCBIfam" id="NF009373">
    <property type="entry name" value="PRK12736.1"/>
    <property type="match status" value="1"/>
</dbReference>
<dbReference type="NCBIfam" id="TIGR00231">
    <property type="entry name" value="small_GTP"/>
    <property type="match status" value="1"/>
</dbReference>
<dbReference type="PANTHER" id="PTHR43721:SF22">
    <property type="entry name" value="ELONGATION FACTOR TU, MITOCHONDRIAL"/>
    <property type="match status" value="1"/>
</dbReference>
<dbReference type="PANTHER" id="PTHR43721">
    <property type="entry name" value="ELONGATION FACTOR TU-RELATED"/>
    <property type="match status" value="1"/>
</dbReference>
<dbReference type="Pfam" id="PF00009">
    <property type="entry name" value="GTP_EFTU"/>
    <property type="match status" value="1"/>
</dbReference>
<dbReference type="Pfam" id="PF03144">
    <property type="entry name" value="GTP_EFTU_D2"/>
    <property type="match status" value="1"/>
</dbReference>
<dbReference type="Pfam" id="PF03143">
    <property type="entry name" value="GTP_EFTU_D3"/>
    <property type="match status" value="1"/>
</dbReference>
<dbReference type="PRINTS" id="PR00315">
    <property type="entry name" value="ELONGATNFCT"/>
</dbReference>
<dbReference type="SUPFAM" id="SSF50465">
    <property type="entry name" value="EF-Tu/eEF-1alpha/eIF2-gamma C-terminal domain"/>
    <property type="match status" value="1"/>
</dbReference>
<dbReference type="SUPFAM" id="SSF52540">
    <property type="entry name" value="P-loop containing nucleoside triphosphate hydrolases"/>
    <property type="match status" value="1"/>
</dbReference>
<dbReference type="SUPFAM" id="SSF50447">
    <property type="entry name" value="Translation proteins"/>
    <property type="match status" value="1"/>
</dbReference>
<dbReference type="PROSITE" id="PS00301">
    <property type="entry name" value="G_TR_1"/>
    <property type="match status" value="1"/>
</dbReference>
<dbReference type="PROSITE" id="PS51722">
    <property type="entry name" value="G_TR_2"/>
    <property type="match status" value="1"/>
</dbReference>
<organism>
    <name type="scientific">Saccharopolyspora erythraea (strain ATCC 11635 / DSM 40517 / JCM 4748 / NBRC 13426 / NCIMB 8594 / NRRL 2338)</name>
    <dbReference type="NCBI Taxonomy" id="405948"/>
    <lineage>
        <taxon>Bacteria</taxon>
        <taxon>Bacillati</taxon>
        <taxon>Actinomycetota</taxon>
        <taxon>Actinomycetes</taxon>
        <taxon>Pseudonocardiales</taxon>
        <taxon>Pseudonocardiaceae</taxon>
        <taxon>Saccharopolyspora</taxon>
    </lineage>
</organism>
<keyword id="KW-0963">Cytoplasm</keyword>
<keyword id="KW-0251">Elongation factor</keyword>
<keyword id="KW-0342">GTP-binding</keyword>
<keyword id="KW-0378">Hydrolase</keyword>
<keyword id="KW-0460">Magnesium</keyword>
<keyword id="KW-0479">Metal-binding</keyword>
<keyword id="KW-0547">Nucleotide-binding</keyword>
<keyword id="KW-0648">Protein biosynthesis</keyword>
<keyword id="KW-1185">Reference proteome</keyword>
<accession>A4FPM7</accession>
<proteinExistence type="inferred from homology"/>
<gene>
    <name evidence="2" type="primary">tuf</name>
    <name type="ordered locus">SACE_6838</name>
</gene>
<feature type="chain" id="PRO_1000015744" description="Elongation factor Tu">
    <location>
        <begin position="1"/>
        <end position="397"/>
    </location>
</feature>
<feature type="domain" description="tr-type G">
    <location>
        <begin position="10"/>
        <end position="206"/>
    </location>
</feature>
<feature type="region of interest" description="G1" evidence="1">
    <location>
        <begin position="19"/>
        <end position="26"/>
    </location>
</feature>
<feature type="region of interest" description="G2" evidence="1">
    <location>
        <begin position="62"/>
        <end position="66"/>
    </location>
</feature>
<feature type="region of interest" description="G3" evidence="1">
    <location>
        <begin position="83"/>
        <end position="86"/>
    </location>
</feature>
<feature type="region of interest" description="G4" evidence="1">
    <location>
        <begin position="138"/>
        <end position="141"/>
    </location>
</feature>
<feature type="region of interest" description="G5" evidence="1">
    <location>
        <begin position="176"/>
        <end position="178"/>
    </location>
</feature>
<feature type="binding site" evidence="2">
    <location>
        <begin position="19"/>
        <end position="26"/>
    </location>
    <ligand>
        <name>GTP</name>
        <dbReference type="ChEBI" id="CHEBI:37565"/>
    </ligand>
</feature>
<feature type="binding site" evidence="2">
    <location>
        <position position="26"/>
    </location>
    <ligand>
        <name>Mg(2+)</name>
        <dbReference type="ChEBI" id="CHEBI:18420"/>
    </ligand>
</feature>
<feature type="binding site" evidence="2">
    <location>
        <begin position="83"/>
        <end position="87"/>
    </location>
    <ligand>
        <name>GTP</name>
        <dbReference type="ChEBI" id="CHEBI:37565"/>
    </ligand>
</feature>
<feature type="binding site" evidence="2">
    <location>
        <begin position="138"/>
        <end position="141"/>
    </location>
    <ligand>
        <name>GTP</name>
        <dbReference type="ChEBI" id="CHEBI:37565"/>
    </ligand>
</feature>
<comment type="function">
    <text evidence="2">GTP hydrolase that promotes the GTP-dependent binding of aminoacyl-tRNA to the A-site of ribosomes during protein biosynthesis.</text>
</comment>
<comment type="catalytic activity">
    <reaction evidence="2">
        <text>GTP + H2O = GDP + phosphate + H(+)</text>
        <dbReference type="Rhea" id="RHEA:19669"/>
        <dbReference type="ChEBI" id="CHEBI:15377"/>
        <dbReference type="ChEBI" id="CHEBI:15378"/>
        <dbReference type="ChEBI" id="CHEBI:37565"/>
        <dbReference type="ChEBI" id="CHEBI:43474"/>
        <dbReference type="ChEBI" id="CHEBI:58189"/>
        <dbReference type="EC" id="3.6.5.3"/>
    </reaction>
    <physiologicalReaction direction="left-to-right" evidence="2">
        <dbReference type="Rhea" id="RHEA:19670"/>
    </physiologicalReaction>
</comment>
<comment type="subunit">
    <text evidence="2">Monomer.</text>
</comment>
<comment type="subcellular location">
    <subcellularLocation>
        <location evidence="2">Cytoplasm</location>
    </subcellularLocation>
</comment>
<comment type="similarity">
    <text evidence="2">Belongs to the TRAFAC class translation factor GTPase superfamily. Classic translation factor GTPase family. EF-Tu/EF-1A subfamily.</text>
</comment>
<protein>
    <recommendedName>
        <fullName evidence="2">Elongation factor Tu</fullName>
        <shortName evidence="2">EF-Tu</shortName>
        <ecNumber evidence="2">3.6.5.3</ecNumber>
    </recommendedName>
</protein>
<evidence type="ECO:0000250" key="1"/>
<evidence type="ECO:0000255" key="2">
    <source>
        <dbReference type="HAMAP-Rule" id="MF_00118"/>
    </source>
</evidence>
<sequence length="397" mass="44041">MAKAKFERDKPHVNIGTIGHVDHGKTTLTAAITKVLHDKHPELNPFTPFDEIDKAPEEKQRGITIQIAHVEYQTEKRHYAHVDAPGHADYVKNMITGAAQMDGAILVVAATDGPMPQTREHVLLARQVGVPYILVALNKADMVDDEEIIELVEMEVRELLSAQEFPGDDVPVVRVSALKALEGDAEWGDKIMELLDAVDENVPDPERETDKPFLMPIEDVFSITGRGTVVTGRIERGVINVNEEVEMVGIKEKPLKTTVTGVEMFRKLLDQGQAGDNVGLLIRGIKREEVERGMVVVKPGTTTPHTEFEAQVYILSKDEGGRHTPFFNNYRPQFYFRTTDVTGVVTLPEGTEMVMPGDNTEMSVQLIQPIAMDEGLRFAIREGGRTVGAGRVTKIHK</sequence>
<name>EFTU_SACEN</name>
<reference key="1">
    <citation type="journal article" date="2007" name="Nat. Biotechnol.">
        <title>Complete genome sequence of the erythromycin-producing bacterium Saccharopolyspora erythraea NRRL23338.</title>
        <authorList>
            <person name="Oliynyk M."/>
            <person name="Samborskyy M."/>
            <person name="Lester J.B."/>
            <person name="Mironenko T."/>
            <person name="Scott N."/>
            <person name="Dickens S."/>
            <person name="Haydock S.F."/>
            <person name="Leadlay P.F."/>
        </authorList>
    </citation>
    <scope>NUCLEOTIDE SEQUENCE [LARGE SCALE GENOMIC DNA]</scope>
    <source>
        <strain>ATCC 11635 / DSM 40517 / JCM 4748 / NBRC 13426 / NCIMB 8594 / NRRL 2338</strain>
    </source>
</reference>